<reference key="1">
    <citation type="submission" date="2006-02" db="EMBL/GenBank/DDBJ databases">
        <title>Complete sequence of chromosome of Rhodoferax ferrireducens DSM 15236.</title>
        <authorList>
            <person name="Copeland A."/>
            <person name="Lucas S."/>
            <person name="Lapidus A."/>
            <person name="Barry K."/>
            <person name="Detter J.C."/>
            <person name="Glavina del Rio T."/>
            <person name="Hammon N."/>
            <person name="Israni S."/>
            <person name="Pitluck S."/>
            <person name="Brettin T."/>
            <person name="Bruce D."/>
            <person name="Han C."/>
            <person name="Tapia R."/>
            <person name="Gilna P."/>
            <person name="Kiss H."/>
            <person name="Schmutz J."/>
            <person name="Larimer F."/>
            <person name="Land M."/>
            <person name="Kyrpides N."/>
            <person name="Ivanova N."/>
            <person name="Richardson P."/>
        </authorList>
    </citation>
    <scope>NUCLEOTIDE SEQUENCE [LARGE SCALE GENOMIC DNA]</scope>
    <source>
        <strain>ATCC BAA-621 / DSM 15236 / T118</strain>
    </source>
</reference>
<feature type="chain" id="PRO_0000331888" description="Methionine--tRNA ligase">
    <location>
        <begin position="1"/>
        <end position="700"/>
    </location>
</feature>
<feature type="domain" description="tRNA-binding" evidence="1">
    <location>
        <begin position="594"/>
        <end position="700"/>
    </location>
</feature>
<feature type="short sequence motif" description="'HIGH' region">
    <location>
        <begin position="12"/>
        <end position="22"/>
    </location>
</feature>
<feature type="short sequence motif" description="'KMSKS' region">
    <location>
        <begin position="348"/>
        <end position="352"/>
    </location>
</feature>
<feature type="binding site" evidence="1">
    <location>
        <position position="143"/>
    </location>
    <ligand>
        <name>Zn(2+)</name>
        <dbReference type="ChEBI" id="CHEBI:29105"/>
    </ligand>
</feature>
<feature type="binding site" evidence="1">
    <location>
        <position position="146"/>
    </location>
    <ligand>
        <name>Zn(2+)</name>
        <dbReference type="ChEBI" id="CHEBI:29105"/>
    </ligand>
</feature>
<feature type="binding site" evidence="1">
    <location>
        <position position="156"/>
    </location>
    <ligand>
        <name>Zn(2+)</name>
        <dbReference type="ChEBI" id="CHEBI:29105"/>
    </ligand>
</feature>
<feature type="binding site" evidence="1">
    <location>
        <position position="159"/>
    </location>
    <ligand>
        <name>Zn(2+)</name>
        <dbReference type="ChEBI" id="CHEBI:29105"/>
    </ligand>
</feature>
<feature type="binding site" evidence="1">
    <location>
        <position position="351"/>
    </location>
    <ligand>
        <name>ATP</name>
        <dbReference type="ChEBI" id="CHEBI:30616"/>
    </ligand>
</feature>
<sequence>MPRQLFVTTALPYANGNFHIGHIMEYIQADIWVRYQRMMGNAVHFVCADDCHGAPIMIAAEKVGKTPQQFVADIASGRKPYLDGFHIGFDNWHSTDGAENHELAQAIYRDLKAAGLISTRVIAQFFDTEKNMFLPDRFIKGECPKCGAKDQYGDNCEECGAVYSPTELKNPYSALSGVTPVLRDSEHYFFKLSDPRCVEFLEQWTTDTNPRGQSRLQAEVYNKIKEWLLPDAEGKRDLGDWDISRDAPYFGIEIPDAPGKYFYVWLDAPIGYLAALKNRFIKLAGDATTGAQHYDDFMADPATEQYHFIGKDIITFHTLFWPAMLHFSGRKTPNAVFVHGFLTVNSEKMSKSRGTGLDPLKYLSLGMNPEWLRYYLATKLTARNEDVEFSPEDFMARVNSDLVGKYINIASRAAGFIAKRFGGQLGVISDDGAALLKQIQIERTSIEQLYEAREFAKALRETMLLADRVNEYVDANKPWELAKQTGMETRLHDVCTVCIEAFRALTAYLKPVLPLLAAQVEVFLNIEPLSFASVSQTLGAVHRIGDYKHLMQRVDIKQLEALFEAQAPVEPDNIATESVAPGGEGMAPVISMDDFSKIDLRIAKIVNCETVSGSTKLLRLTLDVGETNTRNVFSGIASSYQPEQLIGKLTVMVANLAPRKMKFGISDGMVLAASHADEKAQPGIYILEPFAGAQPGMRVH</sequence>
<name>SYM_ALBFT</name>
<accession>Q21TB9</accession>
<protein>
    <recommendedName>
        <fullName evidence="1">Methionine--tRNA ligase</fullName>
        <ecNumber evidence="1">6.1.1.10</ecNumber>
    </recommendedName>
    <alternativeName>
        <fullName evidence="1">Methionyl-tRNA synthetase</fullName>
        <shortName evidence="1">MetRS</shortName>
    </alternativeName>
</protein>
<gene>
    <name evidence="1" type="primary">metG</name>
    <name type="ordered locus">Rfer_3275</name>
</gene>
<evidence type="ECO:0000255" key="1">
    <source>
        <dbReference type="HAMAP-Rule" id="MF_00098"/>
    </source>
</evidence>
<proteinExistence type="inferred from homology"/>
<keyword id="KW-0030">Aminoacyl-tRNA synthetase</keyword>
<keyword id="KW-0067">ATP-binding</keyword>
<keyword id="KW-0963">Cytoplasm</keyword>
<keyword id="KW-0436">Ligase</keyword>
<keyword id="KW-0479">Metal-binding</keyword>
<keyword id="KW-0547">Nucleotide-binding</keyword>
<keyword id="KW-0648">Protein biosynthesis</keyword>
<keyword id="KW-1185">Reference proteome</keyword>
<keyword id="KW-0694">RNA-binding</keyword>
<keyword id="KW-0820">tRNA-binding</keyword>
<keyword id="KW-0862">Zinc</keyword>
<organism>
    <name type="scientific">Albidiferax ferrireducens (strain ATCC BAA-621 / DSM 15236 / T118)</name>
    <name type="common">Rhodoferax ferrireducens</name>
    <dbReference type="NCBI Taxonomy" id="338969"/>
    <lineage>
        <taxon>Bacteria</taxon>
        <taxon>Pseudomonadati</taxon>
        <taxon>Pseudomonadota</taxon>
        <taxon>Betaproteobacteria</taxon>
        <taxon>Burkholderiales</taxon>
        <taxon>Comamonadaceae</taxon>
        <taxon>Rhodoferax</taxon>
    </lineage>
</organism>
<dbReference type="EC" id="6.1.1.10" evidence="1"/>
<dbReference type="EMBL" id="CP000267">
    <property type="protein sequence ID" value="ABD70984.1"/>
    <property type="molecule type" value="Genomic_DNA"/>
</dbReference>
<dbReference type="RefSeq" id="WP_011465547.1">
    <property type="nucleotide sequence ID" value="NC_007908.1"/>
</dbReference>
<dbReference type="SMR" id="Q21TB9"/>
<dbReference type="STRING" id="338969.Rfer_3275"/>
<dbReference type="KEGG" id="rfr:Rfer_3275"/>
<dbReference type="eggNOG" id="COG0073">
    <property type="taxonomic scope" value="Bacteria"/>
</dbReference>
<dbReference type="eggNOG" id="COG0143">
    <property type="taxonomic scope" value="Bacteria"/>
</dbReference>
<dbReference type="HOGENOM" id="CLU_009710_7_0_4"/>
<dbReference type="OrthoDB" id="9810191at2"/>
<dbReference type="Proteomes" id="UP000008332">
    <property type="component" value="Chromosome"/>
</dbReference>
<dbReference type="GO" id="GO:0005829">
    <property type="term" value="C:cytosol"/>
    <property type="evidence" value="ECO:0007669"/>
    <property type="project" value="TreeGrafter"/>
</dbReference>
<dbReference type="GO" id="GO:0005524">
    <property type="term" value="F:ATP binding"/>
    <property type="evidence" value="ECO:0007669"/>
    <property type="project" value="UniProtKB-UniRule"/>
</dbReference>
<dbReference type="GO" id="GO:0046872">
    <property type="term" value="F:metal ion binding"/>
    <property type="evidence" value="ECO:0007669"/>
    <property type="project" value="UniProtKB-KW"/>
</dbReference>
<dbReference type="GO" id="GO:0004825">
    <property type="term" value="F:methionine-tRNA ligase activity"/>
    <property type="evidence" value="ECO:0007669"/>
    <property type="project" value="UniProtKB-UniRule"/>
</dbReference>
<dbReference type="GO" id="GO:0000049">
    <property type="term" value="F:tRNA binding"/>
    <property type="evidence" value="ECO:0007669"/>
    <property type="project" value="UniProtKB-KW"/>
</dbReference>
<dbReference type="GO" id="GO:0006431">
    <property type="term" value="P:methionyl-tRNA aminoacylation"/>
    <property type="evidence" value="ECO:0007669"/>
    <property type="project" value="UniProtKB-UniRule"/>
</dbReference>
<dbReference type="CDD" id="cd07957">
    <property type="entry name" value="Anticodon_Ia_Met"/>
    <property type="match status" value="1"/>
</dbReference>
<dbReference type="CDD" id="cd02800">
    <property type="entry name" value="tRNA_bind_EcMetRS_like"/>
    <property type="match status" value="1"/>
</dbReference>
<dbReference type="FunFam" id="2.20.28.20:FF:000001">
    <property type="entry name" value="Methionine--tRNA ligase"/>
    <property type="match status" value="1"/>
</dbReference>
<dbReference type="FunFam" id="2.40.50.140:FF:000042">
    <property type="entry name" value="Methionine--tRNA ligase"/>
    <property type="match status" value="1"/>
</dbReference>
<dbReference type="Gene3D" id="3.40.50.620">
    <property type="entry name" value="HUPs"/>
    <property type="match status" value="1"/>
</dbReference>
<dbReference type="Gene3D" id="1.10.730.10">
    <property type="entry name" value="Isoleucyl-tRNA Synthetase, Domain 1"/>
    <property type="match status" value="1"/>
</dbReference>
<dbReference type="Gene3D" id="2.20.28.20">
    <property type="entry name" value="Methionyl-tRNA synthetase, Zn-domain"/>
    <property type="match status" value="1"/>
</dbReference>
<dbReference type="Gene3D" id="2.40.50.140">
    <property type="entry name" value="Nucleic acid-binding proteins"/>
    <property type="match status" value="1"/>
</dbReference>
<dbReference type="HAMAP" id="MF_00098">
    <property type="entry name" value="Met_tRNA_synth_type1"/>
    <property type="match status" value="1"/>
</dbReference>
<dbReference type="InterPro" id="IPR001412">
    <property type="entry name" value="aa-tRNA-synth_I_CS"/>
</dbReference>
<dbReference type="InterPro" id="IPR041872">
    <property type="entry name" value="Anticodon_Met"/>
</dbReference>
<dbReference type="InterPro" id="IPR004495">
    <property type="entry name" value="Met-tRNA-synth_bsu_C"/>
</dbReference>
<dbReference type="InterPro" id="IPR023458">
    <property type="entry name" value="Met-tRNA_ligase_1"/>
</dbReference>
<dbReference type="InterPro" id="IPR014758">
    <property type="entry name" value="Met-tRNA_synth"/>
</dbReference>
<dbReference type="InterPro" id="IPR015413">
    <property type="entry name" value="Methionyl/Leucyl_tRNA_Synth"/>
</dbReference>
<dbReference type="InterPro" id="IPR033911">
    <property type="entry name" value="MetRS_core"/>
</dbReference>
<dbReference type="InterPro" id="IPR029038">
    <property type="entry name" value="MetRS_Zn"/>
</dbReference>
<dbReference type="InterPro" id="IPR012340">
    <property type="entry name" value="NA-bd_OB-fold"/>
</dbReference>
<dbReference type="InterPro" id="IPR014729">
    <property type="entry name" value="Rossmann-like_a/b/a_fold"/>
</dbReference>
<dbReference type="InterPro" id="IPR002547">
    <property type="entry name" value="tRNA-bd_dom"/>
</dbReference>
<dbReference type="InterPro" id="IPR009080">
    <property type="entry name" value="tRNAsynth_Ia_anticodon-bd"/>
</dbReference>
<dbReference type="NCBIfam" id="TIGR00398">
    <property type="entry name" value="metG"/>
    <property type="match status" value="1"/>
</dbReference>
<dbReference type="NCBIfam" id="TIGR00399">
    <property type="entry name" value="metG_C_term"/>
    <property type="match status" value="1"/>
</dbReference>
<dbReference type="NCBIfam" id="NF001100">
    <property type="entry name" value="PRK00133.1"/>
    <property type="match status" value="1"/>
</dbReference>
<dbReference type="PANTHER" id="PTHR45765">
    <property type="entry name" value="METHIONINE--TRNA LIGASE"/>
    <property type="match status" value="1"/>
</dbReference>
<dbReference type="PANTHER" id="PTHR45765:SF1">
    <property type="entry name" value="METHIONINE--TRNA LIGASE, CYTOPLASMIC"/>
    <property type="match status" value="1"/>
</dbReference>
<dbReference type="Pfam" id="PF09334">
    <property type="entry name" value="tRNA-synt_1g"/>
    <property type="match status" value="1"/>
</dbReference>
<dbReference type="Pfam" id="PF01588">
    <property type="entry name" value="tRNA_bind"/>
    <property type="match status" value="1"/>
</dbReference>
<dbReference type="PRINTS" id="PR01041">
    <property type="entry name" value="TRNASYNTHMET"/>
</dbReference>
<dbReference type="SUPFAM" id="SSF47323">
    <property type="entry name" value="Anticodon-binding domain of a subclass of class I aminoacyl-tRNA synthetases"/>
    <property type="match status" value="1"/>
</dbReference>
<dbReference type="SUPFAM" id="SSF57770">
    <property type="entry name" value="Methionyl-tRNA synthetase (MetRS), Zn-domain"/>
    <property type="match status" value="1"/>
</dbReference>
<dbReference type="SUPFAM" id="SSF50249">
    <property type="entry name" value="Nucleic acid-binding proteins"/>
    <property type="match status" value="1"/>
</dbReference>
<dbReference type="SUPFAM" id="SSF52374">
    <property type="entry name" value="Nucleotidylyl transferase"/>
    <property type="match status" value="1"/>
</dbReference>
<dbReference type="PROSITE" id="PS00178">
    <property type="entry name" value="AA_TRNA_LIGASE_I"/>
    <property type="match status" value="1"/>
</dbReference>
<dbReference type="PROSITE" id="PS50886">
    <property type="entry name" value="TRBD"/>
    <property type="match status" value="1"/>
</dbReference>
<comment type="function">
    <text evidence="1">Is required not only for elongation of protein synthesis but also for the initiation of all mRNA translation through initiator tRNA(fMet) aminoacylation.</text>
</comment>
<comment type="catalytic activity">
    <reaction evidence="1">
        <text>tRNA(Met) + L-methionine + ATP = L-methionyl-tRNA(Met) + AMP + diphosphate</text>
        <dbReference type="Rhea" id="RHEA:13481"/>
        <dbReference type="Rhea" id="RHEA-COMP:9667"/>
        <dbReference type="Rhea" id="RHEA-COMP:9698"/>
        <dbReference type="ChEBI" id="CHEBI:30616"/>
        <dbReference type="ChEBI" id="CHEBI:33019"/>
        <dbReference type="ChEBI" id="CHEBI:57844"/>
        <dbReference type="ChEBI" id="CHEBI:78442"/>
        <dbReference type="ChEBI" id="CHEBI:78530"/>
        <dbReference type="ChEBI" id="CHEBI:456215"/>
        <dbReference type="EC" id="6.1.1.10"/>
    </reaction>
</comment>
<comment type="cofactor">
    <cofactor evidence="1">
        <name>Zn(2+)</name>
        <dbReference type="ChEBI" id="CHEBI:29105"/>
    </cofactor>
    <text evidence="1">Binds 1 zinc ion per subunit.</text>
</comment>
<comment type="subunit">
    <text evidence="1">Homodimer.</text>
</comment>
<comment type="subcellular location">
    <subcellularLocation>
        <location evidence="1">Cytoplasm</location>
    </subcellularLocation>
</comment>
<comment type="similarity">
    <text evidence="1">Belongs to the class-I aminoacyl-tRNA synthetase family. MetG type 1 subfamily.</text>
</comment>